<reference key="1">
    <citation type="journal article" date="1987" name="Thromb. Haemost.">
        <title>The primary structure of the inhibitor of tissue plasminogen activator found in the seeds of Erythrina caffra.</title>
        <authorList>
            <person name="Joubert F.J."/>
            <person name="Dowdle E.B.D."/>
        </authorList>
    </citation>
    <scope>PROTEIN SEQUENCE</scope>
    <source>
        <tissue>Seed</tissue>
    </source>
</reference>
<reference key="2">
    <citation type="journal article" date="1991" name="J. Mol. Biol.">
        <title>Crystal structure of a Kunitz-type trypsin inhibitor from Erythrina caffra seeds.</title>
        <authorList>
            <person name="Onesti S."/>
            <person name="Brick P."/>
            <person name="Blow D.M."/>
        </authorList>
    </citation>
    <scope>X-RAY CRYSTALLOGRAPHY (2.5 ANGSTROMS)</scope>
    <scope>DISULFIDE BONDS</scope>
</reference>
<accession>P09943</accession>
<name>IDE3_ERYCA</name>
<comment type="function">
    <text>Inhibition of trypsin.</text>
</comment>
<comment type="similarity">
    <text evidence="2">Belongs to the protease inhibitor I3 (leguminous Kunitz-type inhibitor) family.</text>
</comment>
<sequence>VLLDGNGEVVQNGGTYYLLPQVWAQGGGVQLAKTGEETCPLTVVQSPNELSDGKPIRIESRLRSAFIPDDDKVRIGFAYAPKCAPSPWWTVVEDEQEGLSVKLSEDESTQFDYPFKFEQVSDQLHSYKLLYCEGKHEKCASIGINRDQKGYRRLVVTEDYPLTVVLKKDESS</sequence>
<proteinExistence type="evidence at protein level"/>
<evidence type="ECO:0000269" key="1">
    <source>
    </source>
</evidence>
<evidence type="ECO:0000305" key="2"/>
<evidence type="ECO:0007829" key="3">
    <source>
        <dbReference type="PDB" id="1TIE"/>
    </source>
</evidence>
<dbReference type="PIR" id="A27220">
    <property type="entry name" value="A27220"/>
</dbReference>
<dbReference type="PDB" id="1TIE">
    <property type="method" value="X-ray"/>
    <property type="resolution" value="2.50 A"/>
    <property type="chains" value="A=1-172"/>
</dbReference>
<dbReference type="PDBsum" id="1TIE"/>
<dbReference type="SMR" id="P09943"/>
<dbReference type="MEROPS" id="I03.011"/>
<dbReference type="EvolutionaryTrace" id="P09943"/>
<dbReference type="GO" id="GO:0004867">
    <property type="term" value="F:serine-type endopeptidase inhibitor activity"/>
    <property type="evidence" value="ECO:0007669"/>
    <property type="project" value="UniProtKB-KW"/>
</dbReference>
<dbReference type="CDD" id="cd23362">
    <property type="entry name" value="beta-trefoil_STI_WCI3-like"/>
    <property type="match status" value="1"/>
</dbReference>
<dbReference type="Gene3D" id="2.80.10.50">
    <property type="match status" value="1"/>
</dbReference>
<dbReference type="InterPro" id="IPR011065">
    <property type="entry name" value="Kunitz_inhibitor_STI-like_sf"/>
</dbReference>
<dbReference type="InterPro" id="IPR002160">
    <property type="entry name" value="Prot_inh_Kunz-lg"/>
</dbReference>
<dbReference type="PANTHER" id="PTHR33107">
    <property type="entry name" value="KUNITZ TRYPSIN INHIBITOR 2"/>
    <property type="match status" value="1"/>
</dbReference>
<dbReference type="PANTHER" id="PTHR33107:SF81">
    <property type="entry name" value="TRYPSIN INHIBITOR A"/>
    <property type="match status" value="1"/>
</dbReference>
<dbReference type="Pfam" id="PF00197">
    <property type="entry name" value="Kunitz_legume"/>
    <property type="match status" value="1"/>
</dbReference>
<dbReference type="PRINTS" id="PR00291">
    <property type="entry name" value="KUNITZINHBTR"/>
</dbReference>
<dbReference type="SMART" id="SM00452">
    <property type="entry name" value="STI"/>
    <property type="match status" value="1"/>
</dbReference>
<dbReference type="SUPFAM" id="SSF50386">
    <property type="entry name" value="STI-like"/>
    <property type="match status" value="1"/>
</dbReference>
<dbReference type="PROSITE" id="PS00283">
    <property type="entry name" value="SOYBEAN_KUNITZ"/>
    <property type="match status" value="1"/>
</dbReference>
<protein>
    <recommendedName>
        <fullName>Trypsin inhibitor DE-3</fullName>
    </recommendedName>
</protein>
<feature type="chain" id="PRO_0000083286" description="Trypsin inhibitor DE-3">
    <location>
        <begin position="1"/>
        <end position="172"/>
    </location>
</feature>
<feature type="site" description="Reactive bond for trypsin">
    <location>
        <begin position="63"/>
        <end position="64"/>
    </location>
</feature>
<feature type="disulfide bond" evidence="1">
    <location>
        <begin position="39"/>
        <end position="83"/>
    </location>
</feature>
<feature type="disulfide bond" evidence="1">
    <location>
        <begin position="132"/>
        <end position="139"/>
    </location>
</feature>
<feature type="strand" evidence="3">
    <location>
        <begin position="15"/>
        <end position="22"/>
    </location>
</feature>
<feature type="helix" evidence="3">
    <location>
        <begin position="23"/>
        <end position="25"/>
    </location>
</feature>
<feature type="strand" evidence="3">
    <location>
        <begin position="29"/>
        <end position="32"/>
    </location>
</feature>
<feature type="strand" evidence="3">
    <location>
        <begin position="42"/>
        <end position="45"/>
    </location>
</feature>
<feature type="strand" evidence="3">
    <location>
        <begin position="56"/>
        <end position="62"/>
    </location>
</feature>
<feature type="strand" evidence="3">
    <location>
        <begin position="73"/>
        <end position="79"/>
    </location>
</feature>
<feature type="strand" evidence="3">
    <location>
        <begin position="87"/>
        <end position="92"/>
    </location>
</feature>
<feature type="strand" evidence="3">
    <location>
        <begin position="100"/>
        <end position="103"/>
    </location>
</feature>
<feature type="strand" evidence="3">
    <location>
        <begin position="105"/>
        <end position="107"/>
    </location>
</feature>
<feature type="helix" evidence="3">
    <location>
        <begin position="108"/>
        <end position="111"/>
    </location>
</feature>
<feature type="strand" evidence="3">
    <location>
        <begin position="115"/>
        <end position="121"/>
    </location>
</feature>
<feature type="turn" evidence="3">
    <location>
        <begin position="122"/>
        <end position="125"/>
    </location>
</feature>
<feature type="strand" evidence="3">
    <location>
        <begin position="126"/>
        <end position="132"/>
    </location>
</feature>
<feature type="turn" evidence="3">
    <location>
        <begin position="135"/>
        <end position="137"/>
    </location>
</feature>
<feature type="strand" evidence="3">
    <location>
        <begin position="139"/>
        <end position="146"/>
    </location>
</feature>
<feature type="strand" evidence="3">
    <location>
        <begin position="152"/>
        <end position="156"/>
    </location>
</feature>
<feature type="strand" evidence="3">
    <location>
        <begin position="158"/>
        <end position="161"/>
    </location>
</feature>
<feature type="strand" evidence="3">
    <location>
        <begin position="163"/>
        <end position="168"/>
    </location>
</feature>
<keyword id="KW-0002">3D-structure</keyword>
<keyword id="KW-0903">Direct protein sequencing</keyword>
<keyword id="KW-1015">Disulfide bond</keyword>
<keyword id="KW-0646">Protease inhibitor</keyword>
<keyword id="KW-0722">Serine protease inhibitor</keyword>
<organism>
    <name type="scientific">Erythrina caffra</name>
    <name type="common">Kaffir tree</name>
    <name type="synonym">Coastal coral tree</name>
    <dbReference type="NCBI Taxonomy" id="3842"/>
    <lineage>
        <taxon>Eukaryota</taxon>
        <taxon>Viridiplantae</taxon>
        <taxon>Streptophyta</taxon>
        <taxon>Embryophyta</taxon>
        <taxon>Tracheophyta</taxon>
        <taxon>Spermatophyta</taxon>
        <taxon>Magnoliopsida</taxon>
        <taxon>eudicotyledons</taxon>
        <taxon>Gunneridae</taxon>
        <taxon>Pentapetalae</taxon>
        <taxon>rosids</taxon>
        <taxon>fabids</taxon>
        <taxon>Fabales</taxon>
        <taxon>Fabaceae</taxon>
        <taxon>Papilionoideae</taxon>
        <taxon>50 kb inversion clade</taxon>
        <taxon>NPAAA clade</taxon>
        <taxon>indigoferoid/millettioid clade</taxon>
        <taxon>Phaseoleae</taxon>
        <taxon>Erythrina</taxon>
    </lineage>
</organism>